<sequence>MSHPALTQLRALRYFKEIPVLDPQLLDWLLLEDSMTKRFEQQGKTVSVTMIREGFVEQNEIPEELPLLPKESRYWLREILLCADGEPWLAGRTVVPVSTLSGPELALQKLGKTPLGRYLFTSSTLTRDFIEIGRDAGLWGRRSRLRLSGKPLLLTELFLPASPLY</sequence>
<accession>B7NS03</accession>
<reference key="1">
    <citation type="journal article" date="2009" name="PLoS Genet.">
        <title>Organised genome dynamics in the Escherichia coli species results in highly diverse adaptive paths.</title>
        <authorList>
            <person name="Touchon M."/>
            <person name="Hoede C."/>
            <person name="Tenaillon O."/>
            <person name="Barbe V."/>
            <person name="Baeriswyl S."/>
            <person name="Bidet P."/>
            <person name="Bingen E."/>
            <person name="Bonacorsi S."/>
            <person name="Bouchier C."/>
            <person name="Bouvet O."/>
            <person name="Calteau A."/>
            <person name="Chiapello H."/>
            <person name="Clermont O."/>
            <person name="Cruveiller S."/>
            <person name="Danchin A."/>
            <person name="Diard M."/>
            <person name="Dossat C."/>
            <person name="Karoui M.E."/>
            <person name="Frapy E."/>
            <person name="Garry L."/>
            <person name="Ghigo J.M."/>
            <person name="Gilles A.M."/>
            <person name="Johnson J."/>
            <person name="Le Bouguenec C."/>
            <person name="Lescat M."/>
            <person name="Mangenot S."/>
            <person name="Martinez-Jehanne V."/>
            <person name="Matic I."/>
            <person name="Nassif X."/>
            <person name="Oztas S."/>
            <person name="Petit M.A."/>
            <person name="Pichon C."/>
            <person name="Rouy Z."/>
            <person name="Ruf C.S."/>
            <person name="Schneider D."/>
            <person name="Tourret J."/>
            <person name="Vacherie B."/>
            <person name="Vallenet D."/>
            <person name="Medigue C."/>
            <person name="Rocha E.P.C."/>
            <person name="Denamur E."/>
        </authorList>
    </citation>
    <scope>NUCLEOTIDE SEQUENCE [LARGE SCALE GENOMIC DNA]</scope>
    <source>
        <strain>IAI39 / ExPEC</strain>
    </source>
</reference>
<gene>
    <name evidence="1" type="primary">ubiC</name>
    <name type="ordered locus">ECIAI39_4460</name>
</gene>
<comment type="function">
    <text evidence="1">Removes the pyruvyl group from chorismate, with concomitant aromatization of the ring, to provide 4-hydroxybenzoate (4HB) for the ubiquinone pathway.</text>
</comment>
<comment type="catalytic activity">
    <reaction evidence="1">
        <text>chorismate = 4-hydroxybenzoate + pyruvate</text>
        <dbReference type="Rhea" id="RHEA:16505"/>
        <dbReference type="ChEBI" id="CHEBI:15361"/>
        <dbReference type="ChEBI" id="CHEBI:17879"/>
        <dbReference type="ChEBI" id="CHEBI:29748"/>
        <dbReference type="EC" id="4.1.3.40"/>
    </reaction>
</comment>
<comment type="pathway">
    <text evidence="1">Cofactor biosynthesis; ubiquinone biosynthesis.</text>
</comment>
<comment type="subunit">
    <text evidence="1">Monomer.</text>
</comment>
<comment type="subcellular location">
    <subcellularLocation>
        <location evidence="1">Cytoplasm</location>
    </subcellularLocation>
</comment>
<comment type="similarity">
    <text evidence="1">Belongs to the UbiC family.</text>
</comment>
<name>UBIC_ECO7I</name>
<feature type="chain" id="PRO_1000186521" description="Chorismate pyruvate-lyase">
    <location>
        <begin position="1"/>
        <end position="165"/>
    </location>
</feature>
<feature type="binding site" evidence="1">
    <location>
        <position position="35"/>
    </location>
    <ligand>
        <name>substrate</name>
    </ligand>
</feature>
<feature type="binding site" evidence="1">
    <location>
        <position position="77"/>
    </location>
    <ligand>
        <name>substrate</name>
    </ligand>
</feature>
<feature type="binding site" evidence="1">
    <location>
        <position position="115"/>
    </location>
    <ligand>
        <name>substrate</name>
    </ligand>
</feature>
<feature type="binding site" evidence="1">
    <location>
        <position position="156"/>
    </location>
    <ligand>
        <name>substrate</name>
    </ligand>
</feature>
<dbReference type="EC" id="4.1.3.40" evidence="1"/>
<dbReference type="EMBL" id="CU928164">
    <property type="protein sequence ID" value="CAR20566.1"/>
    <property type="molecule type" value="Genomic_DNA"/>
</dbReference>
<dbReference type="RefSeq" id="WP_012602638.1">
    <property type="nucleotide sequence ID" value="NC_011750.1"/>
</dbReference>
<dbReference type="RefSeq" id="YP_002410333.1">
    <property type="nucleotide sequence ID" value="NC_011750.1"/>
</dbReference>
<dbReference type="SMR" id="B7NS03"/>
<dbReference type="STRING" id="585057.ECIAI39_4460"/>
<dbReference type="KEGG" id="ect:ECIAI39_4460"/>
<dbReference type="PATRIC" id="fig|585057.6.peg.4606"/>
<dbReference type="HOGENOM" id="CLU_096824_1_0_6"/>
<dbReference type="UniPathway" id="UPA00232"/>
<dbReference type="Proteomes" id="UP000000749">
    <property type="component" value="Chromosome"/>
</dbReference>
<dbReference type="GO" id="GO:0005829">
    <property type="term" value="C:cytosol"/>
    <property type="evidence" value="ECO:0007669"/>
    <property type="project" value="TreeGrafter"/>
</dbReference>
<dbReference type="GO" id="GO:0008813">
    <property type="term" value="F:chorismate lyase activity"/>
    <property type="evidence" value="ECO:0007669"/>
    <property type="project" value="UniProtKB-UniRule"/>
</dbReference>
<dbReference type="GO" id="GO:0042866">
    <property type="term" value="P:pyruvate biosynthetic process"/>
    <property type="evidence" value="ECO:0007669"/>
    <property type="project" value="UniProtKB-UniRule"/>
</dbReference>
<dbReference type="GO" id="GO:0006744">
    <property type="term" value="P:ubiquinone biosynthetic process"/>
    <property type="evidence" value="ECO:0007669"/>
    <property type="project" value="UniProtKB-UniRule"/>
</dbReference>
<dbReference type="FunFam" id="3.40.1410.10:FF:000002">
    <property type="entry name" value="Chorismate pyruvate-lyase"/>
    <property type="match status" value="1"/>
</dbReference>
<dbReference type="Gene3D" id="3.40.1410.10">
    <property type="entry name" value="Chorismate lyase-like"/>
    <property type="match status" value="1"/>
</dbReference>
<dbReference type="HAMAP" id="MF_01632">
    <property type="entry name" value="UbiC"/>
    <property type="match status" value="1"/>
</dbReference>
<dbReference type="InterPro" id="IPR007440">
    <property type="entry name" value="Chorismate--pyruvate_lyase"/>
</dbReference>
<dbReference type="InterPro" id="IPR028978">
    <property type="entry name" value="Chorismate_lyase_/UTRA_dom_sf"/>
</dbReference>
<dbReference type="NCBIfam" id="NF008656">
    <property type="entry name" value="PRK11655.1"/>
    <property type="match status" value="1"/>
</dbReference>
<dbReference type="PANTHER" id="PTHR38683">
    <property type="entry name" value="CHORISMATE PYRUVATE-LYASE"/>
    <property type="match status" value="1"/>
</dbReference>
<dbReference type="PANTHER" id="PTHR38683:SF1">
    <property type="entry name" value="CHORISMATE PYRUVATE-LYASE"/>
    <property type="match status" value="1"/>
</dbReference>
<dbReference type="Pfam" id="PF04345">
    <property type="entry name" value="Chor_lyase"/>
    <property type="match status" value="1"/>
</dbReference>
<dbReference type="SUPFAM" id="SSF64288">
    <property type="entry name" value="Chorismate lyase-like"/>
    <property type="match status" value="1"/>
</dbReference>
<proteinExistence type="inferred from homology"/>
<keyword id="KW-0963">Cytoplasm</keyword>
<keyword id="KW-0456">Lyase</keyword>
<keyword id="KW-0670">Pyruvate</keyword>
<keyword id="KW-0831">Ubiquinone biosynthesis</keyword>
<evidence type="ECO:0000255" key="1">
    <source>
        <dbReference type="HAMAP-Rule" id="MF_01632"/>
    </source>
</evidence>
<protein>
    <recommendedName>
        <fullName evidence="1">Chorismate pyruvate-lyase</fullName>
        <shortName evidence="1">CL</shortName>
        <shortName evidence="1">CPL</shortName>
        <ecNumber evidence="1">4.1.3.40</ecNumber>
    </recommendedName>
</protein>
<organism>
    <name type="scientific">Escherichia coli O7:K1 (strain IAI39 / ExPEC)</name>
    <dbReference type="NCBI Taxonomy" id="585057"/>
    <lineage>
        <taxon>Bacteria</taxon>
        <taxon>Pseudomonadati</taxon>
        <taxon>Pseudomonadota</taxon>
        <taxon>Gammaproteobacteria</taxon>
        <taxon>Enterobacterales</taxon>
        <taxon>Enterobacteriaceae</taxon>
        <taxon>Escherichia</taxon>
    </lineage>
</organism>